<organism>
    <name type="scientific">Mus musculus</name>
    <name type="common">Mouse</name>
    <dbReference type="NCBI Taxonomy" id="10090"/>
    <lineage>
        <taxon>Eukaryota</taxon>
        <taxon>Metazoa</taxon>
        <taxon>Chordata</taxon>
        <taxon>Craniata</taxon>
        <taxon>Vertebrata</taxon>
        <taxon>Euteleostomi</taxon>
        <taxon>Mammalia</taxon>
        <taxon>Eutheria</taxon>
        <taxon>Euarchontoglires</taxon>
        <taxon>Glires</taxon>
        <taxon>Rodentia</taxon>
        <taxon>Myomorpha</taxon>
        <taxon>Muroidea</taxon>
        <taxon>Muridae</taxon>
        <taxon>Murinae</taxon>
        <taxon>Mus</taxon>
        <taxon>Mus</taxon>
    </lineage>
</organism>
<protein>
    <recommendedName>
        <fullName>Serine protease 46</fullName>
        <ecNumber>3.4.21.-</ecNumber>
    </recommendedName>
</protein>
<feature type="chain" id="PRO_0000418333" description="Serine protease 46">
    <location>
        <begin position="1"/>
        <end position="314"/>
    </location>
</feature>
<feature type="transmembrane region" description="Helical" evidence="2">
    <location>
        <begin position="293"/>
        <end position="313"/>
    </location>
</feature>
<feature type="domain" description="Peptidase S1" evidence="3">
    <location>
        <begin position="44"/>
        <end position="281"/>
    </location>
</feature>
<feature type="active site" description="Charge relay system" evidence="1">
    <location>
        <position position="84"/>
    </location>
</feature>
<feature type="active site" description="Charge relay system" evidence="1">
    <location>
        <position position="130"/>
    </location>
</feature>
<feature type="active site" description="Charge relay system" evidence="1">
    <location>
        <position position="233"/>
    </location>
</feature>
<feature type="disulfide bond" evidence="3">
    <location>
        <begin position="69"/>
        <end position="85"/>
    </location>
</feature>
<feature type="disulfide bond" evidence="3">
    <location>
        <begin position="164"/>
        <end position="239"/>
    </location>
</feature>
<feature type="disulfide bond" evidence="3">
    <location>
        <begin position="197"/>
        <end position="219"/>
    </location>
</feature>
<feature type="disulfide bond" evidence="3">
    <location>
        <begin position="229"/>
        <end position="257"/>
    </location>
</feature>
<feature type="splice variant" id="VSP_044025" description="In isoform 2." evidence="4">
    <original>MACGSVDPHGLLSSPLASARLNSLPYME</original>
    <variation>MRATLCIPLSTLPS</variation>
    <location>
        <begin position="1"/>
        <end position="28"/>
    </location>
</feature>
<reference key="1">
    <citation type="journal article" date="2005" name="Science">
        <title>The transcriptional landscape of the mammalian genome.</title>
        <authorList>
            <person name="Carninci P."/>
            <person name="Kasukawa T."/>
            <person name="Katayama S."/>
            <person name="Gough J."/>
            <person name="Frith M.C."/>
            <person name="Maeda N."/>
            <person name="Oyama R."/>
            <person name="Ravasi T."/>
            <person name="Lenhard B."/>
            <person name="Wells C."/>
            <person name="Kodzius R."/>
            <person name="Shimokawa K."/>
            <person name="Bajic V.B."/>
            <person name="Brenner S.E."/>
            <person name="Batalov S."/>
            <person name="Forrest A.R."/>
            <person name="Zavolan M."/>
            <person name="Davis M.J."/>
            <person name="Wilming L.G."/>
            <person name="Aidinis V."/>
            <person name="Allen J.E."/>
            <person name="Ambesi-Impiombato A."/>
            <person name="Apweiler R."/>
            <person name="Aturaliya R.N."/>
            <person name="Bailey T.L."/>
            <person name="Bansal M."/>
            <person name="Baxter L."/>
            <person name="Beisel K.W."/>
            <person name="Bersano T."/>
            <person name="Bono H."/>
            <person name="Chalk A.M."/>
            <person name="Chiu K.P."/>
            <person name="Choudhary V."/>
            <person name="Christoffels A."/>
            <person name="Clutterbuck D.R."/>
            <person name="Crowe M.L."/>
            <person name="Dalla E."/>
            <person name="Dalrymple B.P."/>
            <person name="de Bono B."/>
            <person name="Della Gatta G."/>
            <person name="di Bernardo D."/>
            <person name="Down T."/>
            <person name="Engstrom P."/>
            <person name="Fagiolini M."/>
            <person name="Faulkner G."/>
            <person name="Fletcher C.F."/>
            <person name="Fukushima T."/>
            <person name="Furuno M."/>
            <person name="Futaki S."/>
            <person name="Gariboldi M."/>
            <person name="Georgii-Hemming P."/>
            <person name="Gingeras T.R."/>
            <person name="Gojobori T."/>
            <person name="Green R.E."/>
            <person name="Gustincich S."/>
            <person name="Harbers M."/>
            <person name="Hayashi Y."/>
            <person name="Hensch T.K."/>
            <person name="Hirokawa N."/>
            <person name="Hill D."/>
            <person name="Huminiecki L."/>
            <person name="Iacono M."/>
            <person name="Ikeo K."/>
            <person name="Iwama A."/>
            <person name="Ishikawa T."/>
            <person name="Jakt M."/>
            <person name="Kanapin A."/>
            <person name="Katoh M."/>
            <person name="Kawasawa Y."/>
            <person name="Kelso J."/>
            <person name="Kitamura H."/>
            <person name="Kitano H."/>
            <person name="Kollias G."/>
            <person name="Krishnan S.P."/>
            <person name="Kruger A."/>
            <person name="Kummerfeld S.K."/>
            <person name="Kurochkin I.V."/>
            <person name="Lareau L.F."/>
            <person name="Lazarevic D."/>
            <person name="Lipovich L."/>
            <person name="Liu J."/>
            <person name="Liuni S."/>
            <person name="McWilliam S."/>
            <person name="Madan Babu M."/>
            <person name="Madera M."/>
            <person name="Marchionni L."/>
            <person name="Matsuda H."/>
            <person name="Matsuzawa S."/>
            <person name="Miki H."/>
            <person name="Mignone F."/>
            <person name="Miyake S."/>
            <person name="Morris K."/>
            <person name="Mottagui-Tabar S."/>
            <person name="Mulder N."/>
            <person name="Nakano N."/>
            <person name="Nakauchi H."/>
            <person name="Ng P."/>
            <person name="Nilsson R."/>
            <person name="Nishiguchi S."/>
            <person name="Nishikawa S."/>
            <person name="Nori F."/>
            <person name="Ohara O."/>
            <person name="Okazaki Y."/>
            <person name="Orlando V."/>
            <person name="Pang K.C."/>
            <person name="Pavan W.J."/>
            <person name="Pavesi G."/>
            <person name="Pesole G."/>
            <person name="Petrovsky N."/>
            <person name="Piazza S."/>
            <person name="Reed J."/>
            <person name="Reid J.F."/>
            <person name="Ring B.Z."/>
            <person name="Ringwald M."/>
            <person name="Rost B."/>
            <person name="Ruan Y."/>
            <person name="Salzberg S.L."/>
            <person name="Sandelin A."/>
            <person name="Schneider C."/>
            <person name="Schoenbach C."/>
            <person name="Sekiguchi K."/>
            <person name="Semple C.A."/>
            <person name="Seno S."/>
            <person name="Sessa L."/>
            <person name="Sheng Y."/>
            <person name="Shibata Y."/>
            <person name="Shimada H."/>
            <person name="Shimada K."/>
            <person name="Silva D."/>
            <person name="Sinclair B."/>
            <person name="Sperling S."/>
            <person name="Stupka E."/>
            <person name="Sugiura K."/>
            <person name="Sultana R."/>
            <person name="Takenaka Y."/>
            <person name="Taki K."/>
            <person name="Tammoja K."/>
            <person name="Tan S.L."/>
            <person name="Tang S."/>
            <person name="Taylor M.S."/>
            <person name="Tegner J."/>
            <person name="Teichmann S.A."/>
            <person name="Ueda H.R."/>
            <person name="van Nimwegen E."/>
            <person name="Verardo R."/>
            <person name="Wei C.L."/>
            <person name="Yagi K."/>
            <person name="Yamanishi H."/>
            <person name="Zabarovsky E."/>
            <person name="Zhu S."/>
            <person name="Zimmer A."/>
            <person name="Hide W."/>
            <person name="Bult C."/>
            <person name="Grimmond S.M."/>
            <person name="Teasdale R.D."/>
            <person name="Liu E.T."/>
            <person name="Brusic V."/>
            <person name="Quackenbush J."/>
            <person name="Wahlestedt C."/>
            <person name="Mattick J.S."/>
            <person name="Hume D.A."/>
            <person name="Kai C."/>
            <person name="Sasaki D."/>
            <person name="Tomaru Y."/>
            <person name="Fukuda S."/>
            <person name="Kanamori-Katayama M."/>
            <person name="Suzuki M."/>
            <person name="Aoki J."/>
            <person name="Arakawa T."/>
            <person name="Iida J."/>
            <person name="Imamura K."/>
            <person name="Itoh M."/>
            <person name="Kato T."/>
            <person name="Kawaji H."/>
            <person name="Kawagashira N."/>
            <person name="Kawashima T."/>
            <person name="Kojima M."/>
            <person name="Kondo S."/>
            <person name="Konno H."/>
            <person name="Nakano K."/>
            <person name="Ninomiya N."/>
            <person name="Nishio T."/>
            <person name="Okada M."/>
            <person name="Plessy C."/>
            <person name="Shibata K."/>
            <person name="Shiraki T."/>
            <person name="Suzuki S."/>
            <person name="Tagami M."/>
            <person name="Waki K."/>
            <person name="Watahiki A."/>
            <person name="Okamura-Oho Y."/>
            <person name="Suzuki H."/>
            <person name="Kawai J."/>
            <person name="Hayashizaki Y."/>
        </authorList>
    </citation>
    <scope>NUCLEOTIDE SEQUENCE [LARGE SCALE MRNA] (ISOFORM 1)</scope>
    <source>
        <strain>C57BL/6J</strain>
        <tissue>Testis</tissue>
    </source>
</reference>
<reference key="2">
    <citation type="journal article" date="2009" name="PLoS Biol.">
        <title>Lineage-specific biology revealed by a finished genome assembly of the mouse.</title>
        <authorList>
            <person name="Church D.M."/>
            <person name="Goodstadt L."/>
            <person name="Hillier L.W."/>
            <person name="Zody M.C."/>
            <person name="Goldstein S."/>
            <person name="She X."/>
            <person name="Bult C.J."/>
            <person name="Agarwala R."/>
            <person name="Cherry J.L."/>
            <person name="DiCuccio M."/>
            <person name="Hlavina W."/>
            <person name="Kapustin Y."/>
            <person name="Meric P."/>
            <person name="Maglott D."/>
            <person name="Birtle Z."/>
            <person name="Marques A.C."/>
            <person name="Graves T."/>
            <person name="Zhou S."/>
            <person name="Teague B."/>
            <person name="Potamousis K."/>
            <person name="Churas C."/>
            <person name="Place M."/>
            <person name="Herschleb J."/>
            <person name="Runnheim R."/>
            <person name="Forrest D."/>
            <person name="Amos-Landgraf J."/>
            <person name="Schwartz D.C."/>
            <person name="Cheng Z."/>
            <person name="Lindblad-Toh K."/>
            <person name="Eichler E.E."/>
            <person name="Ponting C.P."/>
        </authorList>
    </citation>
    <scope>NUCLEOTIDE SEQUENCE [LARGE SCALE GENOMIC DNA]</scope>
    <source>
        <strain>C57BL/6J</strain>
    </source>
</reference>
<reference key="3">
    <citation type="journal article" date="2004" name="Genome Res.">
        <title>The status, quality, and expansion of the NIH full-length cDNA project: the Mammalian Gene Collection (MGC).</title>
        <authorList>
            <consortium name="The MGC Project Team"/>
        </authorList>
    </citation>
    <scope>NUCLEOTIDE SEQUENCE [LARGE SCALE MRNA] (ISOFORM 2)</scope>
    <source>
        <tissue>Testis</tissue>
    </source>
</reference>
<reference key="4">
    <citation type="journal article" date="2010" name="Cell">
        <title>A tissue-specific atlas of mouse protein phosphorylation and expression.</title>
        <authorList>
            <person name="Huttlin E.L."/>
            <person name="Jedrychowski M.P."/>
            <person name="Elias J.E."/>
            <person name="Goswami T."/>
            <person name="Rad R."/>
            <person name="Beausoleil S.A."/>
            <person name="Villen J."/>
            <person name="Haas W."/>
            <person name="Sowa M.E."/>
            <person name="Gygi S.P."/>
        </authorList>
    </citation>
    <scope>IDENTIFICATION BY MASS SPECTROMETRY [LARGE SCALE ANALYSIS]</scope>
    <source>
        <tissue>Testis</tissue>
    </source>
</reference>
<sequence>MACGSVDPHGLLSSPLASARLNSLPYMEGPWIWSCGQTNITCKVVNGKAVEVGKWPWQVSILFLGMYICSGSLIHHHWILTAAHCLQRSKNPAKYTVKVGVQTLPDNSTSELLVTRIVIHENFINRMSDDIAILKLKYPVTWSPLVQPICLPSFNLKPSIGTMCWVVGWGLEKAEGHPKTPYSVQGLAVRIVNNEICNHRYQFLLLKNQKKFIGNDMLCTSSEWGLDTCQDTSGSSLVCQMNKTWVQMGVVSWNFDCGRRQFPSVYTSTSHFTQWIKRQIGDLKFTSMAVPSFLSPFILTGYILLVSLGSLWLL</sequence>
<proteinExistence type="evidence at protein level"/>
<keyword id="KW-0025">Alternative splicing</keyword>
<keyword id="KW-1015">Disulfide bond</keyword>
<keyword id="KW-0378">Hydrolase</keyword>
<keyword id="KW-0472">Membrane</keyword>
<keyword id="KW-0645">Protease</keyword>
<keyword id="KW-1185">Reference proteome</keyword>
<keyword id="KW-0720">Serine protease</keyword>
<keyword id="KW-0812">Transmembrane</keyword>
<keyword id="KW-1133">Transmembrane helix</keyword>
<name>PRS46_MOUSE</name>
<dbReference type="EC" id="3.4.21.-"/>
<dbReference type="EMBL" id="AK007173">
    <property type="protein sequence ID" value="BAC25167.1"/>
    <property type="status" value="ALT_FRAME"/>
    <property type="molecule type" value="mRNA"/>
</dbReference>
<dbReference type="EMBL" id="AC139378">
    <property type="status" value="NOT_ANNOTATED_CDS"/>
    <property type="molecule type" value="Genomic_DNA"/>
</dbReference>
<dbReference type="EMBL" id="BC087878">
    <property type="protein sequence ID" value="AAH87878.1"/>
    <property type="molecule type" value="mRNA"/>
</dbReference>
<dbReference type="CCDS" id="CCDS23576.2">
    <molecule id="Q5M8S2-1"/>
</dbReference>
<dbReference type="RefSeq" id="NP_898926.2">
    <molecule id="Q5M8S2-1"/>
    <property type="nucleotide sequence ID" value="NM_183103.3"/>
</dbReference>
<dbReference type="SMR" id="Q5M8S2"/>
<dbReference type="FunCoup" id="Q5M8S2">
    <property type="interactions" value="132"/>
</dbReference>
<dbReference type="STRING" id="10090.ENSMUSP00000135787"/>
<dbReference type="MEROPS" id="S01.250"/>
<dbReference type="SwissPalm" id="Q5M8S2"/>
<dbReference type="PaxDb" id="10090-ENSMUSP00000135787"/>
<dbReference type="ProteomicsDB" id="291907">
    <molecule id="Q5M8S2-1"/>
</dbReference>
<dbReference type="ProteomicsDB" id="291908">
    <molecule id="Q5M8S2-2"/>
</dbReference>
<dbReference type="DNASU" id="74306"/>
<dbReference type="Ensembl" id="ENSMUST00000176403.8">
    <molecule id="Q5M8S2-1"/>
    <property type="protein sequence ID" value="ENSMUSP00000135787.2"/>
    <property type="gene ID" value="ENSMUSG00000049719.15"/>
</dbReference>
<dbReference type="GeneID" id="74306"/>
<dbReference type="KEGG" id="mmu:74306"/>
<dbReference type="UCSC" id="uc009ruy.1">
    <molecule id="Q5M8S2-1"/>
    <property type="organism name" value="mouse"/>
</dbReference>
<dbReference type="AGR" id="MGI:1921556"/>
<dbReference type="CTD" id="74306"/>
<dbReference type="MGI" id="MGI:1921556">
    <property type="gene designation" value="Prss46"/>
</dbReference>
<dbReference type="VEuPathDB" id="HostDB:ENSMUSG00000049719"/>
<dbReference type="eggNOG" id="KOG3627">
    <property type="taxonomic scope" value="Eukaryota"/>
</dbReference>
<dbReference type="GeneTree" id="ENSGT00940000162940"/>
<dbReference type="HOGENOM" id="CLU_006842_0_4_1"/>
<dbReference type="InParanoid" id="Q5M8S2"/>
<dbReference type="OMA" id="ICNHRYQ"/>
<dbReference type="OrthoDB" id="10059102at2759"/>
<dbReference type="PhylomeDB" id="Q5M8S2"/>
<dbReference type="TreeFam" id="TF351676"/>
<dbReference type="BioGRID-ORCS" id="74306">
    <property type="hits" value="2 hits in 77 CRISPR screens"/>
</dbReference>
<dbReference type="ChiTaRS" id="Prss46">
    <property type="organism name" value="mouse"/>
</dbReference>
<dbReference type="PRO" id="PR:Q5M8S2"/>
<dbReference type="Proteomes" id="UP000000589">
    <property type="component" value="Chromosome 9"/>
</dbReference>
<dbReference type="RNAct" id="Q5M8S2">
    <property type="molecule type" value="protein"/>
</dbReference>
<dbReference type="Bgee" id="ENSMUSG00000049719">
    <property type="expression patterns" value="Expressed in spermatid and 5 other cell types or tissues"/>
</dbReference>
<dbReference type="GO" id="GO:0016020">
    <property type="term" value="C:membrane"/>
    <property type="evidence" value="ECO:0007669"/>
    <property type="project" value="UniProtKB-SubCell"/>
</dbReference>
<dbReference type="GO" id="GO:0004252">
    <property type="term" value="F:serine-type endopeptidase activity"/>
    <property type="evidence" value="ECO:0007669"/>
    <property type="project" value="InterPro"/>
</dbReference>
<dbReference type="GO" id="GO:0006508">
    <property type="term" value="P:proteolysis"/>
    <property type="evidence" value="ECO:0007669"/>
    <property type="project" value="UniProtKB-KW"/>
</dbReference>
<dbReference type="CDD" id="cd00190">
    <property type="entry name" value="Tryp_SPc"/>
    <property type="match status" value="1"/>
</dbReference>
<dbReference type="FunFam" id="2.40.10.10:FF:000039">
    <property type="entry name" value="Brain-specific serine protease 4"/>
    <property type="match status" value="1"/>
</dbReference>
<dbReference type="Gene3D" id="2.40.10.10">
    <property type="entry name" value="Trypsin-like serine proteases"/>
    <property type="match status" value="1"/>
</dbReference>
<dbReference type="InterPro" id="IPR009003">
    <property type="entry name" value="Peptidase_S1_PA"/>
</dbReference>
<dbReference type="InterPro" id="IPR043504">
    <property type="entry name" value="Peptidase_S1_PA_chymotrypsin"/>
</dbReference>
<dbReference type="InterPro" id="IPR001314">
    <property type="entry name" value="Peptidase_S1A"/>
</dbReference>
<dbReference type="InterPro" id="IPR051487">
    <property type="entry name" value="Ser/Thr_Proteases_Immune/Dev"/>
</dbReference>
<dbReference type="InterPro" id="IPR001254">
    <property type="entry name" value="Trypsin_dom"/>
</dbReference>
<dbReference type="InterPro" id="IPR018114">
    <property type="entry name" value="TRYPSIN_HIS"/>
</dbReference>
<dbReference type="PANTHER" id="PTHR24256">
    <property type="entry name" value="TRYPTASE-RELATED"/>
    <property type="match status" value="1"/>
</dbReference>
<dbReference type="Pfam" id="PF00089">
    <property type="entry name" value="Trypsin"/>
    <property type="match status" value="1"/>
</dbReference>
<dbReference type="PRINTS" id="PR00722">
    <property type="entry name" value="CHYMOTRYPSIN"/>
</dbReference>
<dbReference type="SMART" id="SM00020">
    <property type="entry name" value="Tryp_SPc"/>
    <property type="match status" value="1"/>
</dbReference>
<dbReference type="SUPFAM" id="SSF50494">
    <property type="entry name" value="Trypsin-like serine proteases"/>
    <property type="match status" value="1"/>
</dbReference>
<dbReference type="PROSITE" id="PS50240">
    <property type="entry name" value="TRYPSIN_DOM"/>
    <property type="match status" value="1"/>
</dbReference>
<dbReference type="PROSITE" id="PS00134">
    <property type="entry name" value="TRYPSIN_HIS"/>
    <property type="match status" value="1"/>
</dbReference>
<accession>Q5M8S2</accession>
<accession>Q8C1Q8</accession>
<comment type="subcellular location">
    <subcellularLocation>
        <location evidence="5">Membrane</location>
        <topology evidence="5">Single-pass membrane protein</topology>
    </subcellularLocation>
</comment>
<comment type="alternative products">
    <event type="alternative splicing"/>
    <isoform>
        <id>Q5M8S2-1</id>
        <name>1</name>
        <sequence type="displayed"/>
    </isoform>
    <isoform>
        <id>Q5M8S2-2</id>
        <name>2</name>
        <sequence type="described" ref="VSP_044025"/>
    </isoform>
</comment>
<comment type="similarity">
    <text evidence="3">Belongs to the peptidase S1 family.</text>
</comment>
<comment type="sequence caution" evidence="5">
    <conflict type="frameshift">
        <sequence resource="EMBL-CDS" id="BAC25167"/>
    </conflict>
</comment>
<evidence type="ECO:0000250" key="1"/>
<evidence type="ECO:0000255" key="2"/>
<evidence type="ECO:0000255" key="3">
    <source>
        <dbReference type="PROSITE-ProRule" id="PRU00274"/>
    </source>
</evidence>
<evidence type="ECO:0000303" key="4">
    <source>
    </source>
</evidence>
<evidence type="ECO:0000305" key="5"/>
<gene>
    <name type="primary">Prss46</name>
</gene>